<feature type="chain" id="PRO_1000069192" description="Proline--tRNA ligase">
    <location>
        <begin position="1"/>
        <end position="478"/>
    </location>
</feature>
<comment type="function">
    <text evidence="1">Catalyzes the attachment of proline to tRNA(Pro) in a two-step reaction: proline is first activated by ATP to form Pro-AMP and then transferred to the acceptor end of tRNA(Pro).</text>
</comment>
<comment type="catalytic activity">
    <reaction evidence="1">
        <text>tRNA(Pro) + L-proline + ATP = L-prolyl-tRNA(Pro) + AMP + diphosphate</text>
        <dbReference type="Rhea" id="RHEA:14305"/>
        <dbReference type="Rhea" id="RHEA-COMP:9700"/>
        <dbReference type="Rhea" id="RHEA-COMP:9702"/>
        <dbReference type="ChEBI" id="CHEBI:30616"/>
        <dbReference type="ChEBI" id="CHEBI:33019"/>
        <dbReference type="ChEBI" id="CHEBI:60039"/>
        <dbReference type="ChEBI" id="CHEBI:78442"/>
        <dbReference type="ChEBI" id="CHEBI:78532"/>
        <dbReference type="ChEBI" id="CHEBI:456215"/>
        <dbReference type="EC" id="6.1.1.15"/>
    </reaction>
</comment>
<comment type="subunit">
    <text evidence="1">Homodimer.</text>
</comment>
<comment type="subcellular location">
    <subcellularLocation>
        <location evidence="1">Cytoplasm</location>
    </subcellularLocation>
</comment>
<comment type="domain">
    <text evidence="1">Consists of three domains: the N-terminal catalytic domain, the anticodon-binding domain and the C-terminal extension.</text>
</comment>
<comment type="similarity">
    <text evidence="1">Belongs to the class-II aminoacyl-tRNA synthetase family. ProS type 3 subfamily.</text>
</comment>
<proteinExistence type="inferred from homology"/>
<gene>
    <name evidence="1" type="primary">proS</name>
    <name type="ordered locus">Mboo_1963</name>
</gene>
<reference key="1">
    <citation type="journal article" date="2015" name="Microbiology">
        <title>Genome of Methanoregula boonei 6A8 reveals adaptations to oligotrophic peatland environments.</title>
        <authorList>
            <person name="Braeuer S."/>
            <person name="Cadillo-Quiroz H."/>
            <person name="Kyrpides N."/>
            <person name="Woyke T."/>
            <person name="Goodwin L."/>
            <person name="Detter C."/>
            <person name="Podell S."/>
            <person name="Yavitt J.B."/>
            <person name="Zinder S.H."/>
        </authorList>
    </citation>
    <scope>NUCLEOTIDE SEQUENCE [LARGE SCALE GENOMIC DNA]</scope>
    <source>
        <strain>DSM 21154 / JCM 14090 / 6A8</strain>
    </source>
</reference>
<dbReference type="EC" id="6.1.1.15" evidence="1"/>
<dbReference type="EMBL" id="CP000780">
    <property type="protein sequence ID" value="ABS56478.1"/>
    <property type="molecule type" value="Genomic_DNA"/>
</dbReference>
<dbReference type="RefSeq" id="WP_012107533.1">
    <property type="nucleotide sequence ID" value="NC_009712.1"/>
</dbReference>
<dbReference type="SMR" id="A7I9R7"/>
<dbReference type="STRING" id="456442.Mboo_1963"/>
<dbReference type="GeneID" id="5410000"/>
<dbReference type="KEGG" id="mbn:Mboo_1963"/>
<dbReference type="eggNOG" id="arCOG00402">
    <property type="taxonomic scope" value="Archaea"/>
</dbReference>
<dbReference type="HOGENOM" id="CLU_001882_4_2_2"/>
<dbReference type="OrthoDB" id="7375at2157"/>
<dbReference type="Proteomes" id="UP000002408">
    <property type="component" value="Chromosome"/>
</dbReference>
<dbReference type="GO" id="GO:0017101">
    <property type="term" value="C:aminoacyl-tRNA synthetase multienzyme complex"/>
    <property type="evidence" value="ECO:0007669"/>
    <property type="project" value="TreeGrafter"/>
</dbReference>
<dbReference type="GO" id="GO:0005737">
    <property type="term" value="C:cytoplasm"/>
    <property type="evidence" value="ECO:0007669"/>
    <property type="project" value="UniProtKB-SubCell"/>
</dbReference>
<dbReference type="GO" id="GO:0005524">
    <property type="term" value="F:ATP binding"/>
    <property type="evidence" value="ECO:0007669"/>
    <property type="project" value="UniProtKB-UniRule"/>
</dbReference>
<dbReference type="GO" id="GO:0004827">
    <property type="term" value="F:proline-tRNA ligase activity"/>
    <property type="evidence" value="ECO:0007669"/>
    <property type="project" value="UniProtKB-UniRule"/>
</dbReference>
<dbReference type="GO" id="GO:0006433">
    <property type="term" value="P:prolyl-tRNA aminoacylation"/>
    <property type="evidence" value="ECO:0007669"/>
    <property type="project" value="UniProtKB-UniRule"/>
</dbReference>
<dbReference type="CDD" id="cd00778">
    <property type="entry name" value="ProRS_core_arch_euk"/>
    <property type="match status" value="1"/>
</dbReference>
<dbReference type="FunFam" id="3.30.930.10:FF:000037">
    <property type="entry name" value="Proline--tRNA ligase"/>
    <property type="match status" value="1"/>
</dbReference>
<dbReference type="Gene3D" id="3.40.50.800">
    <property type="entry name" value="Anticodon-binding domain"/>
    <property type="match status" value="1"/>
</dbReference>
<dbReference type="Gene3D" id="3.30.930.10">
    <property type="entry name" value="Bira Bifunctional Protein, Domain 2"/>
    <property type="match status" value="1"/>
</dbReference>
<dbReference type="Gene3D" id="3.30.110.30">
    <property type="entry name" value="C-terminal domain of ProRS"/>
    <property type="match status" value="1"/>
</dbReference>
<dbReference type="HAMAP" id="MF_01571">
    <property type="entry name" value="Pro_tRNA_synth_type3"/>
    <property type="match status" value="1"/>
</dbReference>
<dbReference type="InterPro" id="IPR002314">
    <property type="entry name" value="aa-tRNA-synt_IIb"/>
</dbReference>
<dbReference type="InterPro" id="IPR006195">
    <property type="entry name" value="aa-tRNA-synth_II"/>
</dbReference>
<dbReference type="InterPro" id="IPR045864">
    <property type="entry name" value="aa-tRNA-synth_II/BPL/LPL"/>
</dbReference>
<dbReference type="InterPro" id="IPR004154">
    <property type="entry name" value="Anticodon-bd"/>
</dbReference>
<dbReference type="InterPro" id="IPR036621">
    <property type="entry name" value="Anticodon-bd_dom_sf"/>
</dbReference>
<dbReference type="InterPro" id="IPR002316">
    <property type="entry name" value="Pro-tRNA-ligase_IIa"/>
</dbReference>
<dbReference type="InterPro" id="IPR004499">
    <property type="entry name" value="Pro-tRNA-ligase_IIa_arc-type"/>
</dbReference>
<dbReference type="InterPro" id="IPR016061">
    <property type="entry name" value="Pro-tRNA_ligase_II_C"/>
</dbReference>
<dbReference type="InterPro" id="IPR017449">
    <property type="entry name" value="Pro-tRNA_synth_II"/>
</dbReference>
<dbReference type="InterPro" id="IPR033721">
    <property type="entry name" value="ProRS_core_arch_euk"/>
</dbReference>
<dbReference type="NCBIfam" id="TIGR00408">
    <property type="entry name" value="proS_fam_I"/>
    <property type="match status" value="1"/>
</dbReference>
<dbReference type="PANTHER" id="PTHR43382:SF2">
    <property type="entry name" value="BIFUNCTIONAL GLUTAMATE_PROLINE--TRNA LIGASE"/>
    <property type="match status" value="1"/>
</dbReference>
<dbReference type="PANTHER" id="PTHR43382">
    <property type="entry name" value="PROLYL-TRNA SYNTHETASE"/>
    <property type="match status" value="1"/>
</dbReference>
<dbReference type="Pfam" id="PF03129">
    <property type="entry name" value="HGTP_anticodon"/>
    <property type="match status" value="1"/>
</dbReference>
<dbReference type="Pfam" id="PF09180">
    <property type="entry name" value="ProRS-C_1"/>
    <property type="match status" value="1"/>
</dbReference>
<dbReference type="Pfam" id="PF00587">
    <property type="entry name" value="tRNA-synt_2b"/>
    <property type="match status" value="1"/>
</dbReference>
<dbReference type="PRINTS" id="PR01046">
    <property type="entry name" value="TRNASYNTHPRO"/>
</dbReference>
<dbReference type="SMART" id="SM00946">
    <property type="entry name" value="ProRS-C_1"/>
    <property type="match status" value="1"/>
</dbReference>
<dbReference type="SUPFAM" id="SSF64586">
    <property type="entry name" value="C-terminal domain of ProRS"/>
    <property type="match status" value="1"/>
</dbReference>
<dbReference type="SUPFAM" id="SSF52954">
    <property type="entry name" value="Class II aaRS ABD-related"/>
    <property type="match status" value="1"/>
</dbReference>
<dbReference type="SUPFAM" id="SSF55681">
    <property type="entry name" value="Class II aaRS and biotin synthetases"/>
    <property type="match status" value="1"/>
</dbReference>
<dbReference type="PROSITE" id="PS50862">
    <property type="entry name" value="AA_TRNA_LIGASE_II"/>
    <property type="match status" value="1"/>
</dbReference>
<sequence length="478" mass="54244">METDTGALPKKQDFSEWYNEILWRAEIMDVRYPVKGLYVWFPYGFAIRKFVYQHLRELLDRDHKETLFPLLIPEQEFMKEAEHIKGFEDEVYWVTHGGTTPLEVKLALRPTSETAIYPMFALWVRSHADLPIKIYQIVNTFRYETKQTRPLIRLREITSFMESHTVHATWDEAEIQVESEIALTREFYRNLCIPIIISKRPDWDKFPGADYTIAVDAIMPNGKTLQIGTVHHLGNHFSRTFNIQYEDKNGEQKEAYQTCYGISERCIAALISLHGDDKGLILPPTVATFQVVIVPITIGKRHEDVLAAAGKLKNDLENAGLRVTLDTRDLRPGAKYYWWEIRGVPLRLELGPRDLDSGKAMAVTRTGEKTTICLANAAEDTTSILTGITDAIRAKAGEHTKSHLCTTHTMDGLDIALNEGKVAVVHWCRDRTCGDTIEEKANSSLLGTEVRSEYIEATDGPCIICGKPGKATLVGRTY</sequence>
<protein>
    <recommendedName>
        <fullName evidence="1">Proline--tRNA ligase</fullName>
        <ecNumber evidence="1">6.1.1.15</ecNumber>
    </recommendedName>
    <alternativeName>
        <fullName evidence="1">Prolyl-tRNA synthetase</fullName>
        <shortName evidence="1">ProRS</shortName>
    </alternativeName>
</protein>
<organism>
    <name type="scientific">Methanoregula boonei (strain DSM 21154 / JCM 14090 / 6A8)</name>
    <dbReference type="NCBI Taxonomy" id="456442"/>
    <lineage>
        <taxon>Archaea</taxon>
        <taxon>Methanobacteriati</taxon>
        <taxon>Methanobacteriota</taxon>
        <taxon>Stenosarchaea group</taxon>
        <taxon>Methanomicrobia</taxon>
        <taxon>Methanomicrobiales</taxon>
        <taxon>Methanoregulaceae</taxon>
        <taxon>Methanoregula</taxon>
    </lineage>
</organism>
<name>SYP_METB6</name>
<keyword id="KW-0030">Aminoacyl-tRNA synthetase</keyword>
<keyword id="KW-0067">ATP-binding</keyword>
<keyword id="KW-0963">Cytoplasm</keyword>
<keyword id="KW-0436">Ligase</keyword>
<keyword id="KW-0547">Nucleotide-binding</keyword>
<keyword id="KW-0648">Protein biosynthesis</keyword>
<keyword id="KW-1185">Reference proteome</keyword>
<evidence type="ECO:0000255" key="1">
    <source>
        <dbReference type="HAMAP-Rule" id="MF_01571"/>
    </source>
</evidence>
<accession>A7I9R7</accession>